<dbReference type="EC" id="7.1.1.-" evidence="1"/>
<dbReference type="EMBL" id="CP000117">
    <property type="protein sequence ID" value="ABA21702.1"/>
    <property type="molecule type" value="Genomic_DNA"/>
</dbReference>
<dbReference type="SMR" id="Q3MBD4"/>
<dbReference type="STRING" id="240292.Ava_2080"/>
<dbReference type="KEGG" id="ava:Ava_2080"/>
<dbReference type="eggNOG" id="ENOG5032ZM4">
    <property type="taxonomic scope" value="Bacteria"/>
</dbReference>
<dbReference type="HOGENOM" id="CLU_171077_0_0_3"/>
<dbReference type="Proteomes" id="UP000002533">
    <property type="component" value="Chromosome"/>
</dbReference>
<dbReference type="GO" id="GO:0031676">
    <property type="term" value="C:plasma membrane-derived thylakoid membrane"/>
    <property type="evidence" value="ECO:0007669"/>
    <property type="project" value="UniProtKB-SubCell"/>
</dbReference>
<dbReference type="GO" id="GO:0016655">
    <property type="term" value="F:oxidoreductase activity, acting on NAD(P)H, quinone or similar compound as acceptor"/>
    <property type="evidence" value="ECO:0007669"/>
    <property type="project" value="UniProtKB-UniRule"/>
</dbReference>
<dbReference type="GO" id="GO:0048038">
    <property type="term" value="F:quinone binding"/>
    <property type="evidence" value="ECO:0007669"/>
    <property type="project" value="UniProtKB-KW"/>
</dbReference>
<dbReference type="HAMAP" id="MF_01355">
    <property type="entry name" value="NDH1_NDH1L"/>
    <property type="match status" value="1"/>
</dbReference>
<dbReference type="InterPro" id="IPR019654">
    <property type="entry name" value="NADH-quinone_OxRdatse_su_L"/>
</dbReference>
<dbReference type="PANTHER" id="PTHR36727">
    <property type="entry name" value="NAD(P)H-QUINONE OXIDOREDUCTASE SUBUNIT L, CHLOROPLASTIC"/>
    <property type="match status" value="1"/>
</dbReference>
<dbReference type="PANTHER" id="PTHR36727:SF2">
    <property type="entry name" value="NAD(P)H-QUINONE OXIDOREDUCTASE SUBUNIT L, CHLOROPLASTIC"/>
    <property type="match status" value="1"/>
</dbReference>
<dbReference type="Pfam" id="PF10716">
    <property type="entry name" value="NdhL"/>
    <property type="match status" value="1"/>
</dbReference>
<sequence>MIVPLLYLALAGAYLLVVPVALMFYLKQRWYVVSSVERTFMYFLVFLFFPGLLVLSPFVNLRPRPRKIEV</sequence>
<comment type="function">
    <text evidence="1">NDH-1 shuttles electrons from an unknown electron donor, via FMN and iron-sulfur (Fe-S) centers, to quinones in the respiratory and/or the photosynthetic chain. The immediate electron acceptor for the enzyme in this species is believed to be plastoquinone. Couples the redox reaction to proton translocation, and thus conserves the redox energy in a proton gradient. Cyanobacterial NDH-1 also plays a role in inorganic carbon-concentration.</text>
</comment>
<comment type="catalytic activity">
    <reaction evidence="1">
        <text>a plastoquinone + NADH + (n+1) H(+)(in) = a plastoquinol + NAD(+) + n H(+)(out)</text>
        <dbReference type="Rhea" id="RHEA:42608"/>
        <dbReference type="Rhea" id="RHEA-COMP:9561"/>
        <dbReference type="Rhea" id="RHEA-COMP:9562"/>
        <dbReference type="ChEBI" id="CHEBI:15378"/>
        <dbReference type="ChEBI" id="CHEBI:17757"/>
        <dbReference type="ChEBI" id="CHEBI:57540"/>
        <dbReference type="ChEBI" id="CHEBI:57945"/>
        <dbReference type="ChEBI" id="CHEBI:62192"/>
    </reaction>
</comment>
<comment type="catalytic activity">
    <reaction evidence="1">
        <text>a plastoquinone + NADPH + (n+1) H(+)(in) = a plastoquinol + NADP(+) + n H(+)(out)</text>
        <dbReference type="Rhea" id="RHEA:42612"/>
        <dbReference type="Rhea" id="RHEA-COMP:9561"/>
        <dbReference type="Rhea" id="RHEA-COMP:9562"/>
        <dbReference type="ChEBI" id="CHEBI:15378"/>
        <dbReference type="ChEBI" id="CHEBI:17757"/>
        <dbReference type="ChEBI" id="CHEBI:57783"/>
        <dbReference type="ChEBI" id="CHEBI:58349"/>
        <dbReference type="ChEBI" id="CHEBI:62192"/>
    </reaction>
</comment>
<comment type="subunit">
    <text evidence="1">NDH-1 can be composed of about 15 different subunits; different subcomplexes with different compositions have been identified which probably have different functions.</text>
</comment>
<comment type="subcellular location">
    <subcellularLocation>
        <location evidence="1">Cellular thylakoid membrane</location>
        <topology evidence="1">Multi-pass membrane protein</topology>
    </subcellularLocation>
</comment>
<comment type="similarity">
    <text evidence="1">Belongs to the complex I NdhL subunit family.</text>
</comment>
<accession>Q3MBD4</accession>
<keyword id="KW-0472">Membrane</keyword>
<keyword id="KW-0520">NAD</keyword>
<keyword id="KW-0521">NADP</keyword>
<keyword id="KW-0618">Plastoquinone</keyword>
<keyword id="KW-0874">Quinone</keyword>
<keyword id="KW-0793">Thylakoid</keyword>
<keyword id="KW-1278">Translocase</keyword>
<keyword id="KW-0812">Transmembrane</keyword>
<keyword id="KW-1133">Transmembrane helix</keyword>
<keyword id="KW-0813">Transport</keyword>
<organism>
    <name type="scientific">Trichormus variabilis (strain ATCC 29413 / PCC 7937)</name>
    <name type="common">Anabaena variabilis</name>
    <dbReference type="NCBI Taxonomy" id="240292"/>
    <lineage>
        <taxon>Bacteria</taxon>
        <taxon>Bacillati</taxon>
        <taxon>Cyanobacteriota</taxon>
        <taxon>Cyanophyceae</taxon>
        <taxon>Nostocales</taxon>
        <taxon>Nostocaceae</taxon>
        <taxon>Trichormus</taxon>
    </lineage>
</organism>
<evidence type="ECO:0000255" key="1">
    <source>
        <dbReference type="HAMAP-Rule" id="MF_01355"/>
    </source>
</evidence>
<feature type="chain" id="PRO_0000353667" description="NAD(P)H-quinone oxidoreductase subunit L">
    <location>
        <begin position="1"/>
        <end position="70"/>
    </location>
</feature>
<feature type="transmembrane region" description="Helical" evidence="1">
    <location>
        <begin position="2"/>
        <end position="22"/>
    </location>
</feature>
<feature type="transmembrane region" description="Helical" evidence="1">
    <location>
        <begin position="39"/>
        <end position="59"/>
    </location>
</feature>
<proteinExistence type="inferred from homology"/>
<name>NDHL_TRIV2</name>
<protein>
    <recommendedName>
        <fullName evidence="1">NAD(P)H-quinone oxidoreductase subunit L</fullName>
        <ecNumber evidence="1">7.1.1.-</ecNumber>
    </recommendedName>
    <alternativeName>
        <fullName evidence="1">NAD(P)H dehydrogenase I subunit L</fullName>
    </alternativeName>
    <alternativeName>
        <fullName>NDH-1 subunit L</fullName>
    </alternativeName>
    <alternativeName>
        <fullName>NDH-L</fullName>
    </alternativeName>
</protein>
<gene>
    <name evidence="1" type="primary">ndhL</name>
    <name type="ordered locus">Ava_2080</name>
</gene>
<reference key="1">
    <citation type="journal article" date="2014" name="Stand. Genomic Sci.">
        <title>Complete genome sequence of Anabaena variabilis ATCC 29413.</title>
        <authorList>
            <person name="Thiel T."/>
            <person name="Pratte B.S."/>
            <person name="Zhong J."/>
            <person name="Goodwin L."/>
            <person name="Copeland A."/>
            <person name="Lucas S."/>
            <person name="Han C."/>
            <person name="Pitluck S."/>
            <person name="Land M.L."/>
            <person name="Kyrpides N.C."/>
            <person name="Woyke T."/>
        </authorList>
    </citation>
    <scope>NUCLEOTIDE SEQUENCE [LARGE SCALE GENOMIC DNA]</scope>
    <source>
        <strain>ATCC 29413 / PCC 7937</strain>
    </source>
</reference>